<evidence type="ECO:0000255" key="1">
    <source>
        <dbReference type="HAMAP-Rule" id="MF_00836"/>
    </source>
</evidence>
<organism>
    <name type="scientific">Acidiphilium cryptum (strain JF-5)</name>
    <dbReference type="NCBI Taxonomy" id="349163"/>
    <lineage>
        <taxon>Bacteria</taxon>
        <taxon>Pseudomonadati</taxon>
        <taxon>Pseudomonadota</taxon>
        <taxon>Alphaproteobacteria</taxon>
        <taxon>Acetobacterales</taxon>
        <taxon>Acidocellaceae</taxon>
        <taxon>Acidiphilium</taxon>
    </lineage>
</organism>
<protein>
    <recommendedName>
        <fullName evidence="1">Ribose 1,5-bisphosphate phosphokinase PhnN</fullName>
        <ecNumber evidence="1">2.7.4.23</ecNumber>
    </recommendedName>
    <alternativeName>
        <fullName evidence="1">Ribose 1,5-bisphosphokinase</fullName>
    </alternativeName>
</protein>
<dbReference type="EC" id="2.7.4.23" evidence="1"/>
<dbReference type="EMBL" id="CP000697">
    <property type="protein sequence ID" value="ABQ32109.1"/>
    <property type="molecule type" value="Genomic_DNA"/>
</dbReference>
<dbReference type="RefSeq" id="WP_012040412.1">
    <property type="nucleotide sequence ID" value="NC_009484.1"/>
</dbReference>
<dbReference type="SMR" id="A5G2M7"/>
<dbReference type="STRING" id="349163.Acry_2919"/>
<dbReference type="KEGG" id="acr:Acry_2919"/>
<dbReference type="eggNOG" id="COG3709">
    <property type="taxonomic scope" value="Bacteria"/>
</dbReference>
<dbReference type="HOGENOM" id="CLU_102477_0_0_5"/>
<dbReference type="UniPathway" id="UPA00087">
    <property type="reaction ID" value="UER00175"/>
</dbReference>
<dbReference type="Proteomes" id="UP000000245">
    <property type="component" value="Chromosome"/>
</dbReference>
<dbReference type="GO" id="GO:0005524">
    <property type="term" value="F:ATP binding"/>
    <property type="evidence" value="ECO:0007669"/>
    <property type="project" value="UniProtKB-KW"/>
</dbReference>
<dbReference type="GO" id="GO:0033863">
    <property type="term" value="F:ribose 1,5-bisphosphate phosphokinase activity"/>
    <property type="evidence" value="ECO:0007669"/>
    <property type="project" value="UniProtKB-UniRule"/>
</dbReference>
<dbReference type="GO" id="GO:0006015">
    <property type="term" value="P:5-phosphoribose 1-diphosphate biosynthetic process"/>
    <property type="evidence" value="ECO:0007669"/>
    <property type="project" value="UniProtKB-UniRule"/>
</dbReference>
<dbReference type="GO" id="GO:0019634">
    <property type="term" value="P:organic phosphonate metabolic process"/>
    <property type="evidence" value="ECO:0007669"/>
    <property type="project" value="UniProtKB-UniRule"/>
</dbReference>
<dbReference type="Gene3D" id="3.40.50.300">
    <property type="entry name" value="P-loop containing nucleotide triphosphate hydrolases"/>
    <property type="match status" value="1"/>
</dbReference>
<dbReference type="HAMAP" id="MF_00836">
    <property type="entry name" value="PhnN"/>
    <property type="match status" value="1"/>
</dbReference>
<dbReference type="InterPro" id="IPR008145">
    <property type="entry name" value="GK/Ca_channel_bsu"/>
</dbReference>
<dbReference type="InterPro" id="IPR027417">
    <property type="entry name" value="P-loop_NTPase"/>
</dbReference>
<dbReference type="InterPro" id="IPR012699">
    <property type="entry name" value="PhnN"/>
</dbReference>
<dbReference type="NCBIfam" id="TIGR02322">
    <property type="entry name" value="phosphon_PhnN"/>
    <property type="match status" value="1"/>
</dbReference>
<dbReference type="SMART" id="SM00072">
    <property type="entry name" value="GuKc"/>
    <property type="match status" value="1"/>
</dbReference>
<dbReference type="SUPFAM" id="SSF52540">
    <property type="entry name" value="P-loop containing nucleoside triphosphate hydrolases"/>
    <property type="match status" value="1"/>
</dbReference>
<accession>A5G2M7</accession>
<comment type="function">
    <text evidence="1">Catalyzes the phosphorylation of ribose 1,5-bisphosphate to 5-phospho-D-ribosyl alpha-1-diphosphate (PRPP).</text>
</comment>
<comment type="catalytic activity">
    <reaction evidence="1">
        <text>alpha-D-ribose 1,5-bisphosphate + ATP = 5-phospho-alpha-D-ribose 1-diphosphate + ADP</text>
        <dbReference type="Rhea" id="RHEA:20109"/>
        <dbReference type="ChEBI" id="CHEBI:30616"/>
        <dbReference type="ChEBI" id="CHEBI:58017"/>
        <dbReference type="ChEBI" id="CHEBI:68688"/>
        <dbReference type="ChEBI" id="CHEBI:456216"/>
        <dbReference type="EC" id="2.7.4.23"/>
    </reaction>
</comment>
<comment type="pathway">
    <text evidence="1">Metabolic intermediate biosynthesis; 5-phospho-alpha-D-ribose 1-diphosphate biosynthesis; 5-phospho-alpha-D-ribose 1-diphosphate from D-ribose 5-phosphate (route II): step 3/3.</text>
</comment>
<comment type="similarity">
    <text evidence="1">Belongs to the ribose 1,5-bisphosphokinase family.</text>
</comment>
<reference key="1">
    <citation type="submission" date="2007-05" db="EMBL/GenBank/DDBJ databases">
        <title>Complete sequence of chromosome of Acidiphilium cryptum JF-5.</title>
        <authorList>
            <consortium name="US DOE Joint Genome Institute"/>
            <person name="Copeland A."/>
            <person name="Lucas S."/>
            <person name="Lapidus A."/>
            <person name="Barry K."/>
            <person name="Detter J.C."/>
            <person name="Glavina del Rio T."/>
            <person name="Hammon N."/>
            <person name="Israni S."/>
            <person name="Dalin E."/>
            <person name="Tice H."/>
            <person name="Pitluck S."/>
            <person name="Sims D."/>
            <person name="Brettin T."/>
            <person name="Bruce D."/>
            <person name="Han C."/>
            <person name="Schmutz J."/>
            <person name="Larimer F."/>
            <person name="Land M."/>
            <person name="Hauser L."/>
            <person name="Kyrpides N."/>
            <person name="Kim E."/>
            <person name="Magnuson T."/>
            <person name="Richardson P."/>
        </authorList>
    </citation>
    <scope>NUCLEOTIDE SEQUENCE [LARGE SCALE GENOMIC DNA]</scope>
    <source>
        <strain>JF-5</strain>
    </source>
</reference>
<keyword id="KW-0067">ATP-binding</keyword>
<keyword id="KW-0547">Nucleotide-binding</keyword>
<keyword id="KW-1185">Reference proteome</keyword>
<keyword id="KW-0808">Transferase</keyword>
<name>PHNN_ACICJ</name>
<proteinExistence type="inferred from homology"/>
<sequence>MPRSGRLVLVVGPSGAGKDTVLREARRRLGHAPDIVFPRRVITRPPDPAEDHEPVSDDEFQRRAFALSWSAHGLSYGIPASIVGDLDAGRIVVVNVSRAIVADARRRFPCFVVAVTAAPAILAARLAVRRRETAAEIGARLARAAAPVEADAVVANETTPEAAGAAFLGILLRCRDLPCLP</sequence>
<feature type="chain" id="PRO_0000412770" description="Ribose 1,5-bisphosphate phosphokinase PhnN">
    <location>
        <begin position="1"/>
        <end position="181"/>
    </location>
</feature>
<feature type="binding site" evidence="1">
    <location>
        <begin position="12"/>
        <end position="19"/>
    </location>
    <ligand>
        <name>ATP</name>
        <dbReference type="ChEBI" id="CHEBI:30616"/>
    </ligand>
</feature>
<gene>
    <name evidence="1" type="primary">phnN</name>
    <name type="ordered locus">Acry_2919</name>
</gene>